<sequence length="354" mass="40377">MQFSPVVASPKLLLQLCISTLHCIMASIISTVCYWTAGACKGTTSPVPPVDSNLDQRKVQNAMTPTSVNYHFTRKCNYKCGFCFHTAKTSFVLPLEEAKRGLKLLKESGMEKINFSGGEPFLHEKGEFLGKLVQFCKLDLQLPSVSIVSNGSMIKEKWFQKYGDYLDILAISCDSFDEATNQLIGRTQGRKSHVDNLHKIRNWCQQYKVAFKINSVINTFNMDEDMTEPITQLNPVRWKVFQCLLIDGENAGEEALREAERFVISDQLFQEFLDRHSSISCLVPESNEKMRNSYLILDEYMRFLDCRAGRKDPSKSILDVGVKDAISFSGFDEKMFLKRGGKYVWSKANMKLQW</sequence>
<comment type="function">
    <text evidence="1">Interferon-inducible iron-sulfur (4FE-4S) cluster-binding antiviral protein which plays a major role in the cell antiviral state induced by type I and type II interferon.</text>
</comment>
<comment type="cofactor">
    <cofactor evidence="3">
        <name>[4Fe-4S] cluster</name>
        <dbReference type="ChEBI" id="CHEBI:49883"/>
    </cofactor>
    <text evidence="3">Binds 1 [4Fe-4S] cluster. The cluster is coordinated with 3 cysteines and an exchangeable S-adenosyl-L-methionine.</text>
</comment>
<comment type="subcellular location">
    <subcellularLocation>
        <location evidence="1">Endoplasmic reticulum membrane</location>
        <topology evidence="1">Peripheral membrane protein</topology>
        <orientation evidence="1">Cytoplasmic side</orientation>
    </subcellularLocation>
</comment>
<comment type="tissue specificity">
    <text evidence="5">Constitutively expressed in spleen, head kidney and trunk kidney. Following viral infection, detected in most organs including liver, gill, intestine, heart, muscle and brain.</text>
</comment>
<comment type="induction">
    <text evidence="5">By interferon type I, type II and LPS. Induced by infection with Infectious spleen and kidney necrosis virus (ISKNV), presumably through type I interferon pathway.</text>
</comment>
<comment type="similarity">
    <text evidence="7">Belongs to the radical SAM superfamily. RSAD2 family.</text>
</comment>
<dbReference type="EMBL" id="AY395718">
    <property type="protein sequence ID" value="AAS77258.1"/>
    <property type="molecule type" value="Genomic_DNA"/>
</dbReference>
<dbReference type="RefSeq" id="XP_044022911.1">
    <property type="nucleotide sequence ID" value="XM_044166976.1"/>
</dbReference>
<dbReference type="SMR" id="Q6EE23"/>
<dbReference type="GeneID" id="122861913"/>
<dbReference type="OrthoDB" id="549750at2759"/>
<dbReference type="GO" id="GO:0005789">
    <property type="term" value="C:endoplasmic reticulum membrane"/>
    <property type="evidence" value="ECO:0007669"/>
    <property type="project" value="UniProtKB-SubCell"/>
</dbReference>
<dbReference type="GO" id="GO:0005811">
    <property type="term" value="C:lipid droplet"/>
    <property type="evidence" value="ECO:0007669"/>
    <property type="project" value="InterPro"/>
</dbReference>
<dbReference type="GO" id="GO:0005739">
    <property type="term" value="C:mitochondrion"/>
    <property type="evidence" value="ECO:0007669"/>
    <property type="project" value="TreeGrafter"/>
</dbReference>
<dbReference type="GO" id="GO:0051539">
    <property type="term" value="F:4 iron, 4 sulfur cluster binding"/>
    <property type="evidence" value="ECO:0007669"/>
    <property type="project" value="UniProtKB-KW"/>
</dbReference>
<dbReference type="GO" id="GO:0003824">
    <property type="term" value="F:catalytic activity"/>
    <property type="evidence" value="ECO:0007669"/>
    <property type="project" value="InterPro"/>
</dbReference>
<dbReference type="GO" id="GO:0046872">
    <property type="term" value="F:metal ion binding"/>
    <property type="evidence" value="ECO:0007669"/>
    <property type="project" value="UniProtKB-KW"/>
</dbReference>
<dbReference type="GO" id="GO:0051607">
    <property type="term" value="P:defense response to virus"/>
    <property type="evidence" value="ECO:0007669"/>
    <property type="project" value="UniProtKB-KW"/>
</dbReference>
<dbReference type="GO" id="GO:0045087">
    <property type="term" value="P:innate immune response"/>
    <property type="evidence" value="ECO:0007669"/>
    <property type="project" value="UniProtKB-KW"/>
</dbReference>
<dbReference type="GO" id="GO:0050778">
    <property type="term" value="P:positive regulation of immune response"/>
    <property type="evidence" value="ECO:0007669"/>
    <property type="project" value="TreeGrafter"/>
</dbReference>
<dbReference type="CDD" id="cd01335">
    <property type="entry name" value="Radical_SAM"/>
    <property type="match status" value="1"/>
</dbReference>
<dbReference type="Gene3D" id="3.20.20.70">
    <property type="entry name" value="Aldolase class I"/>
    <property type="match status" value="1"/>
</dbReference>
<dbReference type="InterPro" id="IPR013785">
    <property type="entry name" value="Aldolase_TIM"/>
</dbReference>
<dbReference type="InterPro" id="IPR006638">
    <property type="entry name" value="Elp3/MiaA/NifB-like_rSAM"/>
</dbReference>
<dbReference type="InterPro" id="IPR026372">
    <property type="entry name" value="RSAD2"/>
</dbReference>
<dbReference type="InterPro" id="IPR051196">
    <property type="entry name" value="RSAD2/Viperin_antiviral"/>
</dbReference>
<dbReference type="InterPro" id="IPR007197">
    <property type="entry name" value="rSAM"/>
</dbReference>
<dbReference type="NCBIfam" id="TIGR04278">
    <property type="entry name" value="viperin"/>
    <property type="match status" value="1"/>
</dbReference>
<dbReference type="NCBIfam" id="NF038283">
    <property type="entry name" value="viperin_w_prok"/>
    <property type="match status" value="1"/>
</dbReference>
<dbReference type="PANTHER" id="PTHR21339">
    <property type="entry name" value="RADICAL S-ADENOSYL METHIONINE DOMAIN-CONTAINING PROTEIN 2"/>
    <property type="match status" value="1"/>
</dbReference>
<dbReference type="PANTHER" id="PTHR21339:SF0">
    <property type="entry name" value="S-ADENOSYLMETHIONINE-DEPENDENT NUCLEOTIDE DEHYDRATASE RSAD2"/>
    <property type="match status" value="1"/>
</dbReference>
<dbReference type="Pfam" id="PF13353">
    <property type="entry name" value="Fer4_12"/>
    <property type="match status" value="1"/>
</dbReference>
<dbReference type="Pfam" id="PF04055">
    <property type="entry name" value="Radical_SAM"/>
    <property type="match status" value="1"/>
</dbReference>
<dbReference type="SFLD" id="SFLDG01088">
    <property type="entry name" value="antiviral_proteins"/>
    <property type="match status" value="1"/>
</dbReference>
<dbReference type="SFLD" id="SFLDG01067">
    <property type="entry name" value="SPASM/twitch_domain_containing"/>
    <property type="match status" value="1"/>
</dbReference>
<dbReference type="SFLD" id="SFLDF00318">
    <property type="entry name" value="Viperin"/>
    <property type="match status" value="1"/>
</dbReference>
<dbReference type="SMART" id="SM00729">
    <property type="entry name" value="Elp3"/>
    <property type="match status" value="1"/>
</dbReference>
<dbReference type="SUPFAM" id="SSF102114">
    <property type="entry name" value="Radical SAM enzymes"/>
    <property type="match status" value="1"/>
</dbReference>
<dbReference type="PROSITE" id="PS51918">
    <property type="entry name" value="RADICAL_SAM"/>
    <property type="match status" value="1"/>
</dbReference>
<protein>
    <recommendedName>
        <fullName evidence="6">S-adenosylmethionine-dependent nucleotide dehydratase RSAD2</fullName>
        <shortName evidence="6">SAND</shortName>
    </recommendedName>
    <alternativeName>
        <fullName>Radical S-adenosyl methionine domain-containing protein 2</fullName>
    </alternativeName>
    <alternativeName>
        <fullName>Virus inhibitory protein, endoplasmic reticulum-associated, interferon-inducible</fullName>
        <shortName>Viperin</shortName>
    </alternativeName>
</protein>
<reference evidence="7 8" key="1">
    <citation type="journal article" date="2004" name="Vet. Immunol. Immunopathol.">
        <title>Molecular cloning of the viperin gene and its promoter region from the mandarin fish Siniperca chuatsi.</title>
        <authorList>
            <person name="Sun B.J."/>
            <person name="Nie P."/>
        </authorList>
    </citation>
    <scope>NUCLEOTIDE SEQUENCE [GENOMIC DNA]</scope>
    <scope>TISSUE SPECIFICITY</scope>
    <scope>INDUCTION</scope>
</reference>
<reference key="2">
    <citation type="journal article" date="2022" name="Front. Mol. Biosci.">
        <title>Radical-SAM dependent nucleotide dehydratase (SAND), rectification of the names of an ancient iron-sulfur enzyme using NC-IUBMB recommendations.</title>
        <authorList>
            <person name="Ji Y."/>
            <person name="Wei L."/>
            <person name="Da A."/>
            <person name="Stark H."/>
            <person name="Hagedoorn P.-L."/>
            <person name="Ciofi-Baffoni S."/>
            <person name="Cowley S.A."/>
            <person name="Louro R.O."/>
            <person name="Todorovic S."/>
            <person name="Mroginski M.A."/>
            <person name="Nicolet Y."/>
            <person name="Roessler M.M."/>
            <person name="Le Brun N.E."/>
            <person name="Piccioli M."/>
            <person name="James W.S."/>
            <person name="Hagen W.R."/>
            <person name="Ebrahimi K.H."/>
        </authorList>
    </citation>
    <scope>NOMENCLATURE</scope>
</reference>
<proteinExistence type="evidence at transcript level"/>
<accession>Q6EE23</accession>
<feature type="chain" id="PRO_0000309590" description="S-adenosylmethionine-dependent nucleotide dehydratase RSAD2">
    <location>
        <begin position="1"/>
        <end position="354"/>
    </location>
</feature>
<feature type="domain" description="Radical SAM core" evidence="4">
    <location>
        <begin position="62"/>
        <end position="282"/>
    </location>
</feature>
<feature type="binding site" evidence="3">
    <location>
        <position position="76"/>
    </location>
    <ligand>
        <name>[4Fe-4S] cluster</name>
        <dbReference type="ChEBI" id="CHEBI:49883"/>
        <note>4Fe-4S-S-AdoMet</note>
    </ligand>
</feature>
<feature type="binding site" evidence="3">
    <location>
        <position position="80"/>
    </location>
    <ligand>
        <name>[4Fe-4S] cluster</name>
        <dbReference type="ChEBI" id="CHEBI:49883"/>
        <note>4Fe-4S-S-AdoMet</note>
    </ligand>
</feature>
<feature type="binding site" evidence="3">
    <location>
        <position position="83"/>
    </location>
    <ligand>
        <name>[4Fe-4S] cluster</name>
        <dbReference type="ChEBI" id="CHEBI:49883"/>
        <note>4Fe-4S-S-AdoMet</note>
    </ligand>
</feature>
<keyword id="KW-0004">4Fe-4S</keyword>
<keyword id="KW-0051">Antiviral defense</keyword>
<keyword id="KW-0256">Endoplasmic reticulum</keyword>
<keyword id="KW-0391">Immunity</keyword>
<keyword id="KW-0399">Innate immunity</keyword>
<keyword id="KW-0408">Iron</keyword>
<keyword id="KW-0411">Iron-sulfur</keyword>
<keyword id="KW-0472">Membrane</keyword>
<keyword id="KW-0479">Metal-binding</keyword>
<keyword id="KW-0949">S-adenosyl-L-methionine</keyword>
<organism>
    <name type="scientific">Siniperca chuatsi</name>
    <name type="common">Mandarin fish</name>
    <dbReference type="NCBI Taxonomy" id="119488"/>
    <lineage>
        <taxon>Eukaryota</taxon>
        <taxon>Metazoa</taxon>
        <taxon>Chordata</taxon>
        <taxon>Craniata</taxon>
        <taxon>Vertebrata</taxon>
        <taxon>Euteleostomi</taxon>
        <taxon>Actinopterygii</taxon>
        <taxon>Neopterygii</taxon>
        <taxon>Teleostei</taxon>
        <taxon>Neoteleostei</taxon>
        <taxon>Acanthomorphata</taxon>
        <taxon>Eupercaria</taxon>
        <taxon>Centrarchiformes</taxon>
        <taxon>Centrarchoidei</taxon>
        <taxon>Sinipercidae</taxon>
        <taxon>Siniperca</taxon>
    </lineage>
</organism>
<name>RSAD2_SINCH</name>
<evidence type="ECO:0000250" key="1"/>
<evidence type="ECO:0000250" key="2">
    <source>
        <dbReference type="UniProtKB" id="Q5RH95"/>
    </source>
</evidence>
<evidence type="ECO:0000250" key="3">
    <source>
        <dbReference type="UniProtKB" id="Q8CBB9"/>
    </source>
</evidence>
<evidence type="ECO:0000255" key="4">
    <source>
        <dbReference type="PROSITE-ProRule" id="PRU01266"/>
    </source>
</evidence>
<evidence type="ECO:0000269" key="5">
    <source>
    </source>
</evidence>
<evidence type="ECO:0000303" key="6">
    <source>
    </source>
</evidence>
<evidence type="ECO:0000305" key="7"/>
<evidence type="ECO:0000312" key="8">
    <source>
        <dbReference type="EMBL" id="AAS77258.1"/>
    </source>
</evidence>
<gene>
    <name evidence="2" type="primary">rsad2</name>
</gene>